<accession>Q215T7</accession>
<protein>
    <recommendedName>
        <fullName evidence="1">Small ribosomal subunit protein bS18</fullName>
    </recommendedName>
    <alternativeName>
        <fullName evidence="2">30S ribosomal protein S18</fullName>
    </alternativeName>
</protein>
<comment type="function">
    <text evidence="1">Binds as a heterodimer with protein bS6 to the central domain of the 16S rRNA, where it helps stabilize the platform of the 30S subunit.</text>
</comment>
<comment type="subunit">
    <text evidence="1">Part of the 30S ribosomal subunit. Forms a tight heterodimer with protein bS6.</text>
</comment>
<comment type="similarity">
    <text evidence="1">Belongs to the bacterial ribosomal protein bS18 family.</text>
</comment>
<proteinExistence type="inferred from homology"/>
<keyword id="KW-0687">Ribonucleoprotein</keyword>
<keyword id="KW-0689">Ribosomal protein</keyword>
<keyword id="KW-0694">RNA-binding</keyword>
<keyword id="KW-0699">rRNA-binding</keyword>
<organism>
    <name type="scientific">Rhodopseudomonas palustris (strain BisB18)</name>
    <dbReference type="NCBI Taxonomy" id="316056"/>
    <lineage>
        <taxon>Bacteria</taxon>
        <taxon>Pseudomonadati</taxon>
        <taxon>Pseudomonadota</taxon>
        <taxon>Alphaproteobacteria</taxon>
        <taxon>Hyphomicrobiales</taxon>
        <taxon>Nitrobacteraceae</taxon>
        <taxon>Rhodopseudomonas</taxon>
    </lineage>
</organism>
<evidence type="ECO:0000255" key="1">
    <source>
        <dbReference type="HAMAP-Rule" id="MF_00270"/>
    </source>
</evidence>
<evidence type="ECO:0000305" key="2"/>
<gene>
    <name evidence="1" type="primary">rpsR</name>
    <name type="ordered locus">RPC_2295</name>
</gene>
<dbReference type="EMBL" id="CP000301">
    <property type="protein sequence ID" value="ABD87849.1"/>
    <property type="molecule type" value="Genomic_DNA"/>
</dbReference>
<dbReference type="SMR" id="Q215T7"/>
<dbReference type="STRING" id="316056.RPC_2295"/>
<dbReference type="KEGG" id="rpc:RPC_2295"/>
<dbReference type="eggNOG" id="COG0238">
    <property type="taxonomic scope" value="Bacteria"/>
</dbReference>
<dbReference type="HOGENOM" id="CLU_148710_2_3_5"/>
<dbReference type="OrthoDB" id="9812008at2"/>
<dbReference type="GO" id="GO:0022627">
    <property type="term" value="C:cytosolic small ribosomal subunit"/>
    <property type="evidence" value="ECO:0007669"/>
    <property type="project" value="TreeGrafter"/>
</dbReference>
<dbReference type="GO" id="GO:0070181">
    <property type="term" value="F:small ribosomal subunit rRNA binding"/>
    <property type="evidence" value="ECO:0007669"/>
    <property type="project" value="TreeGrafter"/>
</dbReference>
<dbReference type="GO" id="GO:0003735">
    <property type="term" value="F:structural constituent of ribosome"/>
    <property type="evidence" value="ECO:0007669"/>
    <property type="project" value="InterPro"/>
</dbReference>
<dbReference type="GO" id="GO:0006412">
    <property type="term" value="P:translation"/>
    <property type="evidence" value="ECO:0007669"/>
    <property type="project" value="UniProtKB-UniRule"/>
</dbReference>
<dbReference type="FunFam" id="4.10.640.10:FF:000006">
    <property type="entry name" value="30S ribosomal protein S18"/>
    <property type="match status" value="1"/>
</dbReference>
<dbReference type="Gene3D" id="4.10.640.10">
    <property type="entry name" value="Ribosomal protein S18"/>
    <property type="match status" value="1"/>
</dbReference>
<dbReference type="HAMAP" id="MF_00270">
    <property type="entry name" value="Ribosomal_bS18"/>
    <property type="match status" value="1"/>
</dbReference>
<dbReference type="InterPro" id="IPR001648">
    <property type="entry name" value="Ribosomal_bS18"/>
</dbReference>
<dbReference type="InterPro" id="IPR018275">
    <property type="entry name" value="Ribosomal_bS18_CS"/>
</dbReference>
<dbReference type="InterPro" id="IPR036870">
    <property type="entry name" value="Ribosomal_bS18_sf"/>
</dbReference>
<dbReference type="NCBIfam" id="TIGR00165">
    <property type="entry name" value="S18"/>
    <property type="match status" value="1"/>
</dbReference>
<dbReference type="PANTHER" id="PTHR13479">
    <property type="entry name" value="30S RIBOSOMAL PROTEIN S18"/>
    <property type="match status" value="1"/>
</dbReference>
<dbReference type="PANTHER" id="PTHR13479:SF40">
    <property type="entry name" value="SMALL RIBOSOMAL SUBUNIT PROTEIN BS18M"/>
    <property type="match status" value="1"/>
</dbReference>
<dbReference type="Pfam" id="PF01084">
    <property type="entry name" value="Ribosomal_S18"/>
    <property type="match status" value="1"/>
</dbReference>
<dbReference type="PRINTS" id="PR00974">
    <property type="entry name" value="RIBOSOMALS18"/>
</dbReference>
<dbReference type="SUPFAM" id="SSF46911">
    <property type="entry name" value="Ribosomal protein S18"/>
    <property type="match status" value="1"/>
</dbReference>
<dbReference type="PROSITE" id="PS00057">
    <property type="entry name" value="RIBOSOMAL_S18"/>
    <property type="match status" value="1"/>
</dbReference>
<sequence>MAEAGARRPFFRRRKTCPFTGPNAPKIDYKDSKLLMRYVSERGKIVPSRITAVSAKKQRELARAIKRSRFLGLLPYVIR</sequence>
<feature type="chain" id="PRO_1000003586" description="Small ribosomal subunit protein bS18">
    <location>
        <begin position="1"/>
        <end position="79"/>
    </location>
</feature>
<name>RS18_RHOPB</name>
<reference key="1">
    <citation type="submission" date="2006-03" db="EMBL/GenBank/DDBJ databases">
        <title>Complete sequence of Rhodopseudomonas palustris BisB18.</title>
        <authorList>
            <consortium name="US DOE Joint Genome Institute"/>
            <person name="Copeland A."/>
            <person name="Lucas S."/>
            <person name="Lapidus A."/>
            <person name="Barry K."/>
            <person name="Detter J.C."/>
            <person name="Glavina del Rio T."/>
            <person name="Hammon N."/>
            <person name="Israni S."/>
            <person name="Dalin E."/>
            <person name="Tice H."/>
            <person name="Pitluck S."/>
            <person name="Chain P."/>
            <person name="Malfatti S."/>
            <person name="Shin M."/>
            <person name="Vergez L."/>
            <person name="Schmutz J."/>
            <person name="Larimer F."/>
            <person name="Land M."/>
            <person name="Hauser L."/>
            <person name="Pelletier D.A."/>
            <person name="Kyrpides N."/>
            <person name="Anderson I."/>
            <person name="Oda Y."/>
            <person name="Harwood C.S."/>
            <person name="Richardson P."/>
        </authorList>
    </citation>
    <scope>NUCLEOTIDE SEQUENCE [LARGE SCALE GENOMIC DNA]</scope>
    <source>
        <strain>BisB18</strain>
    </source>
</reference>